<keyword id="KW-0067">ATP-binding</keyword>
<keyword id="KW-0963">Cytoplasm</keyword>
<keyword id="KW-0206">Cytoskeleton</keyword>
<keyword id="KW-0378">Hydrolase</keyword>
<keyword id="KW-0488">Methylation</keyword>
<keyword id="KW-0547">Nucleotide-binding</keyword>
<keyword id="KW-1185">Reference proteome</keyword>
<feature type="chain" id="PRO_0000233392" description="Actin-2">
    <location>
        <begin position="1"/>
        <end position="376"/>
    </location>
</feature>
<feature type="binding site" evidence="1">
    <location>
        <position position="14"/>
    </location>
    <ligand>
        <name>ATP</name>
        <dbReference type="ChEBI" id="CHEBI:30616"/>
    </ligand>
</feature>
<feature type="binding site" evidence="1">
    <location>
        <position position="15"/>
    </location>
    <ligand>
        <name>ATP</name>
        <dbReference type="ChEBI" id="CHEBI:30616"/>
    </ligand>
</feature>
<feature type="binding site" evidence="1">
    <location>
        <position position="16"/>
    </location>
    <ligand>
        <name>ATP</name>
        <dbReference type="ChEBI" id="CHEBI:30616"/>
    </ligand>
</feature>
<feature type="binding site" evidence="1">
    <location>
        <position position="18"/>
    </location>
    <ligand>
        <name>ATP</name>
        <dbReference type="ChEBI" id="CHEBI:30616"/>
    </ligand>
</feature>
<feature type="binding site" evidence="1">
    <location>
        <position position="157"/>
    </location>
    <ligand>
        <name>ATP</name>
        <dbReference type="ChEBI" id="CHEBI:30616"/>
    </ligand>
</feature>
<feature type="binding site" evidence="1">
    <location>
        <position position="158"/>
    </location>
    <ligand>
        <name>ATP</name>
        <dbReference type="ChEBI" id="CHEBI:30616"/>
    </ligand>
</feature>
<feature type="binding site" evidence="1">
    <location>
        <position position="159"/>
    </location>
    <ligand>
        <name>ATP</name>
        <dbReference type="ChEBI" id="CHEBI:30616"/>
    </ligand>
</feature>
<feature type="binding site" evidence="1">
    <location>
        <position position="213"/>
    </location>
    <ligand>
        <name>ATP</name>
        <dbReference type="ChEBI" id="CHEBI:30616"/>
    </ligand>
</feature>
<feature type="binding site" evidence="1">
    <location>
        <position position="303"/>
    </location>
    <ligand>
        <name>ATP</name>
        <dbReference type="ChEBI" id="CHEBI:30616"/>
    </ligand>
</feature>
<feature type="modified residue" description="Tele-methylhistidine" evidence="1">
    <location>
        <position position="73"/>
    </location>
</feature>
<evidence type="ECO:0000250" key="1">
    <source>
        <dbReference type="UniProtKB" id="Q4YU79"/>
    </source>
</evidence>
<evidence type="ECO:0000250" key="2">
    <source>
        <dbReference type="UniProtKB" id="Q8I4X0"/>
    </source>
</evidence>
<evidence type="ECO:0000305" key="3"/>
<organism>
    <name type="scientific">Plasmodium falciparum (isolate 3D7)</name>
    <dbReference type="NCBI Taxonomy" id="36329"/>
    <lineage>
        <taxon>Eukaryota</taxon>
        <taxon>Sar</taxon>
        <taxon>Alveolata</taxon>
        <taxon>Apicomplexa</taxon>
        <taxon>Aconoidasida</taxon>
        <taxon>Haemosporida</taxon>
        <taxon>Plasmodiidae</taxon>
        <taxon>Plasmodium</taxon>
        <taxon>Plasmodium (Laverania)</taxon>
    </lineage>
</organism>
<dbReference type="EC" id="3.6.4.-" evidence="1"/>
<dbReference type="EMBL" id="LN999946">
    <property type="protein sequence ID" value="CZT99835.1"/>
    <property type="molecule type" value="Genomic_DNA"/>
</dbReference>
<dbReference type="RefSeq" id="XP_001348297.1">
    <property type="nucleotide sequence ID" value="XM_001348261.1"/>
</dbReference>
<dbReference type="SMR" id="Q8ILW9"/>
<dbReference type="BioGRID" id="1207072">
    <property type="interactions" value="1"/>
</dbReference>
<dbReference type="IntAct" id="Q8ILW9">
    <property type="interactions" value="1"/>
</dbReference>
<dbReference type="STRING" id="36329.Q8ILW9"/>
<dbReference type="PaxDb" id="5833-PF14_0124"/>
<dbReference type="EnsemblProtists" id="CZT99835">
    <property type="protein sequence ID" value="CZT99835"/>
    <property type="gene ID" value="PF3D7_1412500"/>
</dbReference>
<dbReference type="GeneID" id="811705"/>
<dbReference type="KEGG" id="pfa:PF3D7_1412500"/>
<dbReference type="VEuPathDB" id="PlasmoDB:PF3D7_1412500"/>
<dbReference type="HOGENOM" id="CLU_027965_0_2_1"/>
<dbReference type="OMA" id="PNIMVGM"/>
<dbReference type="OrthoDB" id="422673at2759"/>
<dbReference type="PhylomeDB" id="Q8ILW9"/>
<dbReference type="Reactome" id="R-PFA-3371497">
    <property type="pathway name" value="HSP90 chaperone cycle for steroid hormone receptors (SHR) in the presence of ligand"/>
</dbReference>
<dbReference type="Reactome" id="R-PFA-6798695">
    <property type="pathway name" value="Neutrophil degranulation"/>
</dbReference>
<dbReference type="Proteomes" id="UP000001450">
    <property type="component" value="Chromosome 14"/>
</dbReference>
<dbReference type="GO" id="GO:0015629">
    <property type="term" value="C:actin cytoskeleton"/>
    <property type="evidence" value="ECO:0000318"/>
    <property type="project" value="GO_Central"/>
</dbReference>
<dbReference type="GO" id="GO:0005884">
    <property type="term" value="C:actin filament"/>
    <property type="evidence" value="ECO:0000250"/>
    <property type="project" value="UniProtKB"/>
</dbReference>
<dbReference type="GO" id="GO:0005737">
    <property type="term" value="C:cytoplasm"/>
    <property type="evidence" value="ECO:0007669"/>
    <property type="project" value="UniProtKB-SubCell"/>
</dbReference>
<dbReference type="GO" id="GO:0005524">
    <property type="term" value="F:ATP binding"/>
    <property type="evidence" value="ECO:0007669"/>
    <property type="project" value="UniProtKB-KW"/>
</dbReference>
<dbReference type="GO" id="GO:0016787">
    <property type="term" value="F:hydrolase activity"/>
    <property type="evidence" value="ECO:0007669"/>
    <property type="project" value="UniProtKB-KW"/>
</dbReference>
<dbReference type="GO" id="GO:0000146">
    <property type="term" value="F:microfilament motor activity"/>
    <property type="evidence" value="ECO:0000304"/>
    <property type="project" value="GeneDB"/>
</dbReference>
<dbReference type="GO" id="GO:0005200">
    <property type="term" value="F:structural constituent of cytoskeleton"/>
    <property type="evidence" value="ECO:0000250"/>
    <property type="project" value="UniProtKB"/>
</dbReference>
<dbReference type="GO" id="GO:0007010">
    <property type="term" value="P:cytoskeleton organization"/>
    <property type="evidence" value="ECO:0000304"/>
    <property type="project" value="GeneDB"/>
</dbReference>
<dbReference type="GO" id="GO:0070360">
    <property type="term" value="P:symbiont-mediated actin polymerization-dependent cell-to-cell migration in host"/>
    <property type="evidence" value="ECO:0000250"/>
    <property type="project" value="UniProtKB"/>
</dbReference>
<dbReference type="CDD" id="cd10224">
    <property type="entry name" value="ASKHA_NBD_actin"/>
    <property type="match status" value="1"/>
</dbReference>
<dbReference type="FunFam" id="3.90.640.10:FF:000007">
    <property type="entry name" value="Actin like 7B"/>
    <property type="match status" value="1"/>
</dbReference>
<dbReference type="FunFam" id="3.30.420.40:FF:000291">
    <property type="entry name" value="Actin, alpha skeletal muscle"/>
    <property type="match status" value="1"/>
</dbReference>
<dbReference type="FunFam" id="3.30.420.40:FF:000501">
    <property type="entry name" value="Predicted protein"/>
    <property type="match status" value="1"/>
</dbReference>
<dbReference type="FunFam" id="3.30.420.40:FF:000058">
    <property type="entry name" value="Putative actin-related protein 5"/>
    <property type="match status" value="1"/>
</dbReference>
<dbReference type="Gene3D" id="3.30.420.40">
    <property type="match status" value="2"/>
</dbReference>
<dbReference type="Gene3D" id="3.90.640.10">
    <property type="entry name" value="Actin, Chain A, domain 4"/>
    <property type="match status" value="1"/>
</dbReference>
<dbReference type="InterPro" id="IPR004000">
    <property type="entry name" value="Actin"/>
</dbReference>
<dbReference type="InterPro" id="IPR020902">
    <property type="entry name" value="Actin/actin-like_CS"/>
</dbReference>
<dbReference type="InterPro" id="IPR004001">
    <property type="entry name" value="Actin_CS"/>
</dbReference>
<dbReference type="InterPro" id="IPR043129">
    <property type="entry name" value="ATPase_NBD"/>
</dbReference>
<dbReference type="PANTHER" id="PTHR11937">
    <property type="entry name" value="ACTIN"/>
    <property type="match status" value="1"/>
</dbReference>
<dbReference type="Pfam" id="PF00022">
    <property type="entry name" value="Actin"/>
    <property type="match status" value="1"/>
</dbReference>
<dbReference type="PRINTS" id="PR00190">
    <property type="entry name" value="ACTIN"/>
</dbReference>
<dbReference type="SMART" id="SM00268">
    <property type="entry name" value="ACTIN"/>
    <property type="match status" value="1"/>
</dbReference>
<dbReference type="SUPFAM" id="SSF53067">
    <property type="entry name" value="Actin-like ATPase domain"/>
    <property type="match status" value="2"/>
</dbReference>
<dbReference type="PROSITE" id="PS00406">
    <property type="entry name" value="ACTINS_1"/>
    <property type="match status" value="1"/>
</dbReference>
<dbReference type="PROSITE" id="PS00432">
    <property type="entry name" value="ACTINS_2"/>
    <property type="match status" value="1"/>
</dbReference>
<dbReference type="PROSITE" id="PS01132">
    <property type="entry name" value="ACTINS_ACT_LIKE"/>
    <property type="match status" value="1"/>
</dbReference>
<proteinExistence type="inferred from homology"/>
<gene>
    <name evidence="3" type="primary">ACT2</name>
    <name evidence="1" type="synonym">ACTII</name>
    <name type="ORF">PF14_0124</name>
    <name type="ORF">PF3D7_1412500</name>
</gene>
<comment type="function">
    <text evidence="1">Actin is a highly conserved protein that polymerizes to produce filaments that form cross-linked networks in the cytoplasm. Polymerizes into longer and more stable actin filaments compared to ACT1/actin-1. Has ATPase activity. ATP hydrolysis leads to the formation of a stable intermediate ADP-inorganic phosphate (Pi) actin, which is followed by the release of Pi. ATP hydrolysis affects filament stability; ADP-bound actin depolymerizes much faster than ATP- or ADP-Pi-bound actin. Plays an essential role in male gametocyte development in the mosquito midgut, functioning in several processes including male gametocyte egress from host erythrocytes, formation of a beating flagellum and relocalization of ACT1/actin-1 to the cytoplasm. On the basal side of the mosquito midgut epithelium, required for the development of ookinetes into sporogonic oocysts.</text>
</comment>
<comment type="catalytic activity">
    <reaction evidence="1">
        <text>ATP + H2O = ADP + phosphate + H(+)</text>
        <dbReference type="Rhea" id="RHEA:13065"/>
        <dbReference type="ChEBI" id="CHEBI:15377"/>
        <dbReference type="ChEBI" id="CHEBI:15378"/>
        <dbReference type="ChEBI" id="CHEBI:30616"/>
        <dbReference type="ChEBI" id="CHEBI:43474"/>
        <dbReference type="ChEBI" id="CHEBI:456216"/>
    </reaction>
</comment>
<comment type="activity regulation">
    <text evidence="1">ATP hydrolysis occurs in the polymeric state. Unlike for mammalian actin, ATP hydrolysis also occurs in the monomeric form and the release of inorganic phosphate (Pi) is more efficient.</text>
</comment>
<comment type="subunit">
    <text evidence="1">Monomer (G-actin). Oligomer (F-actin). Polymerization of globular actin (G-actin) leads to a structural filament (F-actin) in the form of a two-stranded helix. Unlike for mammalian monomeric actin, monomeric actin is able to induce oligomerization with ATP or ADP. Mg(2+), which is used to coordinate ATP, is required for polymerization.</text>
</comment>
<comment type="subcellular location">
    <subcellularLocation>
        <location evidence="1">Cytoplasm</location>
    </subcellularLocation>
    <subcellularLocation>
        <location evidence="2">Cytoplasm</location>
        <location evidence="2">Cytoskeleton</location>
    </subcellularLocation>
    <text evidence="1">Prior to gametocyte activation in the mosquito midgut, localizes to the cytoplasm. Following gametocyte activation, localizes to a ring around the nucleus.</text>
</comment>
<comment type="miscellaneous">
    <text evidence="1">ACT1 and ACT2 differ in their polymerization, filament stability and helical structure. Unlike mammalian actin, Apicomplexa actins do not form long and stable filaments.</text>
</comment>
<comment type="similarity">
    <text evidence="3">Belongs to the actin family.</text>
</comment>
<reference key="1">
    <citation type="journal article" date="2002" name="Nature">
        <title>Genome sequence of the human malaria parasite Plasmodium falciparum.</title>
        <authorList>
            <person name="Gardner M.J."/>
            <person name="Hall N."/>
            <person name="Fung E."/>
            <person name="White O."/>
            <person name="Berriman M."/>
            <person name="Hyman R.W."/>
            <person name="Carlton J.M."/>
            <person name="Pain A."/>
            <person name="Nelson K.E."/>
            <person name="Bowman S."/>
            <person name="Paulsen I.T."/>
            <person name="James K.D."/>
            <person name="Eisen J.A."/>
            <person name="Rutherford K.M."/>
            <person name="Salzberg S.L."/>
            <person name="Craig A."/>
            <person name="Kyes S."/>
            <person name="Chan M.-S."/>
            <person name="Nene V."/>
            <person name="Shallom S.J."/>
            <person name="Suh B."/>
            <person name="Peterson J."/>
            <person name="Angiuoli S."/>
            <person name="Pertea M."/>
            <person name="Allen J."/>
            <person name="Selengut J."/>
            <person name="Haft D."/>
            <person name="Mather M.W."/>
            <person name="Vaidya A.B."/>
            <person name="Martin D.M.A."/>
            <person name="Fairlamb A.H."/>
            <person name="Fraunholz M.J."/>
            <person name="Roos D.S."/>
            <person name="Ralph S.A."/>
            <person name="McFadden G.I."/>
            <person name="Cummings L.M."/>
            <person name="Subramanian G.M."/>
            <person name="Mungall C."/>
            <person name="Venter J.C."/>
            <person name="Carucci D.J."/>
            <person name="Hoffman S.L."/>
            <person name="Newbold C."/>
            <person name="Davis R.W."/>
            <person name="Fraser C.M."/>
            <person name="Barrell B.G."/>
        </authorList>
    </citation>
    <scope>NUCLEOTIDE SEQUENCE [LARGE SCALE GENOMIC DNA]</scope>
    <source>
        <strain>3D7</strain>
    </source>
</reference>
<name>ACT2_PLAF7</name>
<sequence>MSEEAVALVVDNGSGMVKSGLAGDDAPKCVFPSIVGRPKMPNIMIGMEQKECYVGDEAQNKRGILTLKYPIEHGIVTNWDDMEKIWHHTFYNELRVSPEEHPVLLTEAPLNPKTNREKMTQIMFETFDVPAMYVSIQAILSLYASGRTTGIVLDSGDGVSHTVPIYEGYVLPHAINRIDMAGRDLTYHMMKLFTERGHTFTTTAEREIVRDIKEKLCYIAMDYDEELKRSEEHSDEIEEIYELPDGNLITVGSERFRCPEALFNPTLIGRECPGLHITAYQSIMKCDIDIRKELYNNIVLSGGTTMYNNIGERLTKEMTNLAPSSMKIKVIAPPERKYSVWIGGSILSSLSTFQQMWITKEEYEDSGPSIVHRKCF</sequence>
<accession>Q8ILW9</accession>
<accession>A0A144A3N9</accession>
<protein>
    <recommendedName>
        <fullName evidence="1">Actin-2</fullName>
        <ecNumber evidence="1">3.6.4.-</ecNumber>
    </recommendedName>
    <alternativeName>
        <fullName evidence="1">Actin II</fullName>
    </alternativeName>
</protein>